<proteinExistence type="inferred from homology"/>
<comment type="function">
    <text evidence="1">Negative regulator of class I heat shock genes (grpE-dnaK-dnaJ and groELS operons). Prevents heat-shock induction of these operons.</text>
</comment>
<comment type="similarity">
    <text evidence="1">Belongs to the HrcA family.</text>
</comment>
<reference key="1">
    <citation type="journal article" date="2002" name="J. Bacteriol.">
        <title>Whole-genome comparison of Mycobacterium tuberculosis clinical and laboratory strains.</title>
        <authorList>
            <person name="Fleischmann R.D."/>
            <person name="Alland D."/>
            <person name="Eisen J.A."/>
            <person name="Carpenter L."/>
            <person name="White O."/>
            <person name="Peterson J.D."/>
            <person name="DeBoy R.T."/>
            <person name="Dodson R.J."/>
            <person name="Gwinn M.L."/>
            <person name="Haft D.H."/>
            <person name="Hickey E.K."/>
            <person name="Kolonay J.F."/>
            <person name="Nelson W.C."/>
            <person name="Umayam L.A."/>
            <person name="Ermolaeva M.D."/>
            <person name="Salzberg S.L."/>
            <person name="Delcher A."/>
            <person name="Utterback T.R."/>
            <person name="Weidman J.F."/>
            <person name="Khouri H.M."/>
            <person name="Gill J."/>
            <person name="Mikula A."/>
            <person name="Bishai W."/>
            <person name="Jacobs W.R. Jr."/>
            <person name="Venter J.C."/>
            <person name="Fraser C.M."/>
        </authorList>
    </citation>
    <scope>NUCLEOTIDE SEQUENCE [LARGE SCALE GENOMIC DNA]</scope>
    <source>
        <strain>CDC 1551 / Oshkosh</strain>
    </source>
</reference>
<feature type="chain" id="PRO_0000427289" description="Heat-inducible transcription repressor HrcA">
    <location>
        <begin position="1"/>
        <end position="343"/>
    </location>
</feature>
<organism>
    <name type="scientific">Mycobacterium tuberculosis (strain CDC 1551 / Oshkosh)</name>
    <dbReference type="NCBI Taxonomy" id="83331"/>
    <lineage>
        <taxon>Bacteria</taxon>
        <taxon>Bacillati</taxon>
        <taxon>Actinomycetota</taxon>
        <taxon>Actinomycetes</taxon>
        <taxon>Mycobacteriales</taxon>
        <taxon>Mycobacteriaceae</taxon>
        <taxon>Mycobacterium</taxon>
        <taxon>Mycobacterium tuberculosis complex</taxon>
    </lineage>
</organism>
<evidence type="ECO:0000255" key="1">
    <source>
        <dbReference type="HAMAP-Rule" id="MF_00081"/>
    </source>
</evidence>
<keyword id="KW-1185">Reference proteome</keyword>
<keyword id="KW-0678">Repressor</keyword>
<keyword id="KW-0346">Stress response</keyword>
<keyword id="KW-0804">Transcription</keyword>
<keyword id="KW-0805">Transcription regulation</keyword>
<sequence>MGSADERRFEVLRAIVADFVATQEPIGSKSLVERHNLGVSSATVRNDMAVLEAEGYITQPHTSSGRVPTEKGYREFVDRLEDVKPLSSAERRAIQSFLESGVDLDDVLRRAVRLLAQLTRQVAVVQYPTLSTSTVRHLEVIALTPARLLMVVITDSGRVDQRIVELGDVIDDHQLAQLREILGQALEGKKLSAASVAVADLASQLGGAGGLGDAVGRAATVLLESLVEHTEERLLLGGTANLTRNAADFGGSLRSILEALEEQVVVLRLLAAQQEAGKVTVRIGHETASEQMVGTSMVSTAYGTAHTVYGGMGVVGPTRMDYPGTIASVAAVALYIGDVLGAR</sequence>
<dbReference type="EMBL" id="AE000516">
    <property type="protein sequence ID" value="AAK46737.1"/>
    <property type="molecule type" value="Genomic_DNA"/>
</dbReference>
<dbReference type="PIR" id="E70587">
    <property type="entry name" value="E70587"/>
</dbReference>
<dbReference type="RefSeq" id="WP_003412252.1">
    <property type="nucleotide sequence ID" value="NZ_KK341227.1"/>
</dbReference>
<dbReference type="SMR" id="P9WMK2"/>
<dbReference type="GeneID" id="45426359"/>
<dbReference type="KEGG" id="mtc:MT2443"/>
<dbReference type="PATRIC" id="fig|83331.31.peg.2633"/>
<dbReference type="HOGENOM" id="CLU_050019_2_0_11"/>
<dbReference type="Proteomes" id="UP000001020">
    <property type="component" value="Chromosome"/>
</dbReference>
<dbReference type="GO" id="GO:0003677">
    <property type="term" value="F:DNA binding"/>
    <property type="evidence" value="ECO:0007669"/>
    <property type="project" value="InterPro"/>
</dbReference>
<dbReference type="GO" id="GO:0045892">
    <property type="term" value="P:negative regulation of DNA-templated transcription"/>
    <property type="evidence" value="ECO:0007669"/>
    <property type="project" value="UniProtKB-UniRule"/>
</dbReference>
<dbReference type="FunFam" id="1.10.10.10:FF:000049">
    <property type="entry name" value="Heat-inducible transcription repressor HrcA"/>
    <property type="match status" value="1"/>
</dbReference>
<dbReference type="FunFam" id="3.30.390.60:FF:000003">
    <property type="entry name" value="Heat-inducible transcription repressor HrcA"/>
    <property type="match status" value="1"/>
</dbReference>
<dbReference type="Gene3D" id="3.30.450.40">
    <property type="match status" value="1"/>
</dbReference>
<dbReference type="Gene3D" id="3.30.390.60">
    <property type="entry name" value="Heat-inducible transcription repressor hrca homolog, domain 3"/>
    <property type="match status" value="1"/>
</dbReference>
<dbReference type="Gene3D" id="1.10.10.10">
    <property type="entry name" value="Winged helix-like DNA-binding domain superfamily/Winged helix DNA-binding domain"/>
    <property type="match status" value="1"/>
</dbReference>
<dbReference type="HAMAP" id="MF_00081">
    <property type="entry name" value="HrcA"/>
    <property type="match status" value="1"/>
</dbReference>
<dbReference type="InterPro" id="IPR029016">
    <property type="entry name" value="GAF-like_dom_sf"/>
</dbReference>
<dbReference type="InterPro" id="IPR002571">
    <property type="entry name" value="HrcA"/>
</dbReference>
<dbReference type="InterPro" id="IPR021153">
    <property type="entry name" value="HrcA_C"/>
</dbReference>
<dbReference type="InterPro" id="IPR036388">
    <property type="entry name" value="WH-like_DNA-bd_sf"/>
</dbReference>
<dbReference type="InterPro" id="IPR036390">
    <property type="entry name" value="WH_DNA-bd_sf"/>
</dbReference>
<dbReference type="InterPro" id="IPR023120">
    <property type="entry name" value="WHTH_transcript_rep_HrcA_IDD"/>
</dbReference>
<dbReference type="NCBIfam" id="TIGR00331">
    <property type="entry name" value="hrcA"/>
    <property type="match status" value="1"/>
</dbReference>
<dbReference type="PANTHER" id="PTHR34824">
    <property type="entry name" value="HEAT-INDUCIBLE TRANSCRIPTION REPRESSOR HRCA"/>
    <property type="match status" value="1"/>
</dbReference>
<dbReference type="PANTHER" id="PTHR34824:SF1">
    <property type="entry name" value="HEAT-INDUCIBLE TRANSCRIPTION REPRESSOR HRCA"/>
    <property type="match status" value="1"/>
</dbReference>
<dbReference type="Pfam" id="PF01628">
    <property type="entry name" value="HrcA"/>
    <property type="match status" value="1"/>
</dbReference>
<dbReference type="PIRSF" id="PIRSF005485">
    <property type="entry name" value="HrcA"/>
    <property type="match status" value="1"/>
</dbReference>
<dbReference type="SUPFAM" id="SSF55781">
    <property type="entry name" value="GAF domain-like"/>
    <property type="match status" value="1"/>
</dbReference>
<dbReference type="SUPFAM" id="SSF46785">
    <property type="entry name" value="Winged helix' DNA-binding domain"/>
    <property type="match status" value="1"/>
</dbReference>
<name>HRCA_MYCTO</name>
<gene>
    <name evidence="1" type="primary">hrcA</name>
    <name type="ordered locus">MT2443</name>
</gene>
<protein>
    <recommendedName>
        <fullName evidence="1">Heat-inducible transcription repressor HrcA</fullName>
    </recommendedName>
</protein>
<accession>P9WMK2</accession>
<accession>L0TC50</accession>
<accession>O05824</accession>
<accession>P64398</accession>